<reference key="1">
    <citation type="journal article" date="2009" name="Genome Res.">
        <title>Newly introduced genomic prophage islands are critical determinants of in vivo competitiveness in the Liverpool epidemic strain of Pseudomonas aeruginosa.</title>
        <authorList>
            <person name="Winstanley C."/>
            <person name="Langille M.G.I."/>
            <person name="Fothergill J.L."/>
            <person name="Kukavica-Ibrulj I."/>
            <person name="Paradis-Bleau C."/>
            <person name="Sanschagrin F."/>
            <person name="Thomson N.R."/>
            <person name="Winsor G.L."/>
            <person name="Quail M.A."/>
            <person name="Lennard N."/>
            <person name="Bignell A."/>
            <person name="Clarke L."/>
            <person name="Seeger K."/>
            <person name="Saunders D."/>
            <person name="Harris D."/>
            <person name="Parkhill J."/>
            <person name="Hancock R.E.W."/>
            <person name="Brinkman F.S.L."/>
            <person name="Levesque R.C."/>
        </authorList>
    </citation>
    <scope>NUCLEOTIDE SEQUENCE [LARGE SCALE GENOMIC DNA]</scope>
    <source>
        <strain>LESB58</strain>
    </source>
</reference>
<evidence type="ECO:0000255" key="1">
    <source>
        <dbReference type="HAMAP-Rule" id="MF_00416"/>
    </source>
</evidence>
<sequence length="369" mass="38181">MTKFKHLLALAALLLAAGAAQAERLKDIASIQGVRTNQLIGYGLVVGLSGSGDQTTQTPFTLQTFNNMLAQFGIKVPANVGNVQLKNVAAVSVHADLPPFAKPGQPIDVTVSSIGNAKSLRGGSLLMTPLKGIDGQVYAVAQGNLVVGGFDAEGRDGSKITVNVPSAGRIPAGATVERAVPSGFDQGNSLTLNLNRPDFTTAKRIVDRINELLGPGVAHAVDGGSVRVSAPLDPNQRVDYLSILENLDVQPGEAVAKVIINSRTGTIVIGQNVKVSPAAVTHGSLTVSITEDPIVSQPGAFSNGQTAVVPRSRVNAEEETKPMFKFGPGTTLDDIVRAVNQVGAAPSDLMAILEALKQAGALQADLIVI</sequence>
<gene>
    <name evidence="1" type="primary">flgI</name>
    <name type="ordered locus">PLES_42371</name>
</gene>
<name>FLGI_PSEA8</name>
<comment type="function">
    <text evidence="1">Assembles around the rod to form the L-ring and probably protects the motor/basal body from shearing forces during rotation.</text>
</comment>
<comment type="subunit">
    <text evidence="1">The basal body constitutes a major portion of the flagellar organelle and consists of four rings (L,P,S, and M) mounted on a central rod.</text>
</comment>
<comment type="subcellular location">
    <subcellularLocation>
        <location evidence="1">Periplasm</location>
    </subcellularLocation>
    <subcellularLocation>
        <location evidence="1">Bacterial flagellum basal body</location>
    </subcellularLocation>
</comment>
<comment type="similarity">
    <text evidence="1">Belongs to the FlgI family.</text>
</comment>
<proteinExistence type="inferred from homology"/>
<protein>
    <recommendedName>
        <fullName evidence="1">Flagellar P-ring protein</fullName>
    </recommendedName>
    <alternativeName>
        <fullName evidence="1">Basal body P-ring protein</fullName>
    </alternativeName>
</protein>
<organism>
    <name type="scientific">Pseudomonas aeruginosa (strain LESB58)</name>
    <dbReference type="NCBI Taxonomy" id="557722"/>
    <lineage>
        <taxon>Bacteria</taxon>
        <taxon>Pseudomonadati</taxon>
        <taxon>Pseudomonadota</taxon>
        <taxon>Gammaproteobacteria</taxon>
        <taxon>Pseudomonadales</taxon>
        <taxon>Pseudomonadaceae</taxon>
        <taxon>Pseudomonas</taxon>
    </lineage>
</organism>
<dbReference type="EMBL" id="FM209186">
    <property type="protein sequence ID" value="CAW28992.1"/>
    <property type="molecule type" value="Genomic_DNA"/>
</dbReference>
<dbReference type="RefSeq" id="WP_003082169.1">
    <property type="nucleotide sequence ID" value="NC_011770.1"/>
</dbReference>
<dbReference type="SMR" id="B7UXA5"/>
<dbReference type="KEGG" id="pag:PLES_42371"/>
<dbReference type="HOGENOM" id="CLU_045235_1_0_6"/>
<dbReference type="GO" id="GO:0009428">
    <property type="term" value="C:bacterial-type flagellum basal body, distal rod, P ring"/>
    <property type="evidence" value="ECO:0007669"/>
    <property type="project" value="InterPro"/>
</dbReference>
<dbReference type="GO" id="GO:0030288">
    <property type="term" value="C:outer membrane-bounded periplasmic space"/>
    <property type="evidence" value="ECO:0007669"/>
    <property type="project" value="InterPro"/>
</dbReference>
<dbReference type="GO" id="GO:0005198">
    <property type="term" value="F:structural molecule activity"/>
    <property type="evidence" value="ECO:0007669"/>
    <property type="project" value="InterPro"/>
</dbReference>
<dbReference type="GO" id="GO:0071973">
    <property type="term" value="P:bacterial-type flagellum-dependent cell motility"/>
    <property type="evidence" value="ECO:0007669"/>
    <property type="project" value="InterPro"/>
</dbReference>
<dbReference type="HAMAP" id="MF_00416">
    <property type="entry name" value="FlgI"/>
    <property type="match status" value="1"/>
</dbReference>
<dbReference type="InterPro" id="IPR001782">
    <property type="entry name" value="Flag_FlgI"/>
</dbReference>
<dbReference type="NCBIfam" id="NF003676">
    <property type="entry name" value="PRK05303.1"/>
    <property type="match status" value="1"/>
</dbReference>
<dbReference type="PANTHER" id="PTHR30381">
    <property type="entry name" value="FLAGELLAR P-RING PERIPLASMIC PROTEIN FLGI"/>
    <property type="match status" value="1"/>
</dbReference>
<dbReference type="PANTHER" id="PTHR30381:SF0">
    <property type="entry name" value="FLAGELLAR P-RING PROTEIN"/>
    <property type="match status" value="1"/>
</dbReference>
<dbReference type="Pfam" id="PF02119">
    <property type="entry name" value="FlgI"/>
    <property type="match status" value="1"/>
</dbReference>
<dbReference type="PRINTS" id="PR01010">
    <property type="entry name" value="FLGPRINGFLGI"/>
</dbReference>
<feature type="signal peptide" evidence="1">
    <location>
        <begin position="1"/>
        <end position="22"/>
    </location>
</feature>
<feature type="chain" id="PRO_1000123976" description="Flagellar P-ring protein">
    <location>
        <begin position="23"/>
        <end position="369"/>
    </location>
</feature>
<accession>B7UXA5</accession>
<keyword id="KW-0975">Bacterial flagellum</keyword>
<keyword id="KW-0574">Periplasm</keyword>
<keyword id="KW-0732">Signal</keyword>